<sequence length="494" mass="55533">MKKMAFDSNKYLQLQRDHILERIHQFDGKLYMEFGGKMLEDYHAARVLPGYEPDNKIKLLKELKDQVEIVITINANNIEHSKARGDLGISYDQEVFRLIDTFHSLDIFVGSVVITQYNNQAAADAFRKQLEKNGITSYLHYPIKGYPTDINHIISPEGMGKNDYIKTSRNLVVVTAPGPGSGKLATCMSQMYHDQINGITSGYAKFETFPVWNLPLHHPVNLAYEAATADLDDVNMIDPFHLETYGKTAVNYNRDIEVFPVLNRTFERILSKSPYASPTDMGVNMVGFSIIDDDLAIEASKQEIIRRYYQTLVDFKAERVPETAIKKIELLMNDIGVSPEDRKVTVLARQKAEQTGAPALALELPNGEMVTGKTSDLFGPTAAVVINAIKKLAHISKETHLIEPEYVKPIQGLKVNHLGSQNPRLHSNEILIALAITAMNNDQAHLAMKELGNLKGSEAHSTVTLTEEDRNVLRKLGVNVTFDPVYQHDKLYRK</sequence>
<organism>
    <name type="scientific">Streptococcus uberis (strain ATCC BAA-854 / 0140J)</name>
    <dbReference type="NCBI Taxonomy" id="218495"/>
    <lineage>
        <taxon>Bacteria</taxon>
        <taxon>Bacillati</taxon>
        <taxon>Bacillota</taxon>
        <taxon>Bacilli</taxon>
        <taxon>Lactobacillales</taxon>
        <taxon>Streptococcaceae</taxon>
        <taxon>Streptococcus</taxon>
    </lineage>
</organism>
<gene>
    <name type="ordered locus">SUB1165</name>
</gene>
<accession>B9DSI5</accession>
<keyword id="KW-1185">Reference proteome</keyword>
<protein>
    <recommendedName>
        <fullName evidence="1">UPF0371 protein SUB1165</fullName>
    </recommendedName>
</protein>
<proteinExistence type="inferred from homology"/>
<comment type="similarity">
    <text evidence="1">Belongs to the UPF0371 family.</text>
</comment>
<reference key="1">
    <citation type="journal article" date="2009" name="BMC Genomics">
        <title>Evidence for niche adaptation in the genome of the bovine pathogen Streptococcus uberis.</title>
        <authorList>
            <person name="Ward P.N."/>
            <person name="Holden M.T.G."/>
            <person name="Leigh J.A."/>
            <person name="Lennard N."/>
            <person name="Bignell A."/>
            <person name="Barron A."/>
            <person name="Clark L."/>
            <person name="Quail M.A."/>
            <person name="Woodward J."/>
            <person name="Barrell B.G."/>
            <person name="Egan S.A."/>
            <person name="Field T.R."/>
            <person name="Maskell D."/>
            <person name="Kehoe M."/>
            <person name="Dowson C.G."/>
            <person name="Chanter N."/>
            <person name="Whatmore A.M."/>
            <person name="Bentley S.D."/>
            <person name="Parkhill J."/>
        </authorList>
    </citation>
    <scope>NUCLEOTIDE SEQUENCE [LARGE SCALE GENOMIC DNA]</scope>
    <source>
        <strain>ATCC BAA-854 / 0140J</strain>
    </source>
</reference>
<feature type="chain" id="PRO_1000185464" description="UPF0371 protein SUB1165">
    <location>
        <begin position="1"/>
        <end position="494"/>
    </location>
</feature>
<name>Y1165_STRU0</name>
<dbReference type="EMBL" id="AM946015">
    <property type="protein sequence ID" value="CAR42570.1"/>
    <property type="molecule type" value="Genomic_DNA"/>
</dbReference>
<dbReference type="RefSeq" id="WP_012658652.1">
    <property type="nucleotide sequence ID" value="NC_012004.1"/>
</dbReference>
<dbReference type="SMR" id="B9DSI5"/>
<dbReference type="KEGG" id="sub:SUB1165"/>
<dbReference type="eggNOG" id="COG4868">
    <property type="taxonomic scope" value="Bacteria"/>
</dbReference>
<dbReference type="HOGENOM" id="CLU_046981_0_0_9"/>
<dbReference type="OrthoDB" id="9803572at2"/>
<dbReference type="Proteomes" id="UP000000449">
    <property type="component" value="Chromosome"/>
</dbReference>
<dbReference type="Gene3D" id="1.20.1570.10">
    <property type="entry name" value="dip2346 domain like"/>
    <property type="match status" value="1"/>
</dbReference>
<dbReference type="Gene3D" id="3.10.630.10">
    <property type="entry name" value="dip2346 domain like"/>
    <property type="match status" value="1"/>
</dbReference>
<dbReference type="Gene3D" id="3.40.140.40">
    <property type="entry name" value="Domain of unknown function (DUF1846), C-terminal subdomain"/>
    <property type="match status" value="1"/>
</dbReference>
<dbReference type="HAMAP" id="MF_01567">
    <property type="entry name" value="UPF0371"/>
    <property type="match status" value="1"/>
</dbReference>
<dbReference type="InterPro" id="IPR014999">
    <property type="entry name" value="DUF1846"/>
</dbReference>
<dbReference type="InterPro" id="IPR048441">
    <property type="entry name" value="DUF1846_C"/>
</dbReference>
<dbReference type="InterPro" id="IPR048496">
    <property type="entry name" value="DUF1846_N"/>
</dbReference>
<dbReference type="NCBIfam" id="NF010184">
    <property type="entry name" value="PRK13663.1"/>
    <property type="match status" value="1"/>
</dbReference>
<dbReference type="Pfam" id="PF08903">
    <property type="entry name" value="DUF1846"/>
    <property type="match status" value="1"/>
</dbReference>
<dbReference type="Pfam" id="PF20921">
    <property type="entry name" value="DUF1846_C"/>
    <property type="match status" value="1"/>
</dbReference>
<dbReference type="PIRSF" id="PIRSF033132">
    <property type="entry name" value="DUF1846"/>
    <property type="match status" value="1"/>
</dbReference>
<evidence type="ECO:0000255" key="1">
    <source>
        <dbReference type="HAMAP-Rule" id="MF_01567"/>
    </source>
</evidence>